<evidence type="ECO:0000255" key="1">
    <source>
        <dbReference type="HAMAP-Rule" id="MF_01719"/>
    </source>
</evidence>
<evidence type="ECO:0000305" key="2"/>
<name>METN_XANOR</name>
<protein>
    <recommendedName>
        <fullName evidence="1">Methionine import ATP-binding protein MetN</fullName>
        <ecNumber evidence="1">7.4.2.11</ecNumber>
    </recommendedName>
</protein>
<feature type="chain" id="PRO_0000270443" description="Methionine import ATP-binding protein MetN">
    <location>
        <begin position="1"/>
        <end position="335"/>
    </location>
</feature>
<feature type="domain" description="ABC transporter" evidence="1">
    <location>
        <begin position="2"/>
        <end position="241"/>
    </location>
</feature>
<feature type="binding site" evidence="1">
    <location>
        <begin position="38"/>
        <end position="45"/>
    </location>
    <ligand>
        <name>ATP</name>
        <dbReference type="ChEBI" id="CHEBI:30616"/>
    </ligand>
</feature>
<proteinExistence type="inferred from homology"/>
<keyword id="KW-0029">Amino-acid transport</keyword>
<keyword id="KW-0067">ATP-binding</keyword>
<keyword id="KW-0997">Cell inner membrane</keyword>
<keyword id="KW-1003">Cell membrane</keyword>
<keyword id="KW-0472">Membrane</keyword>
<keyword id="KW-0547">Nucleotide-binding</keyword>
<keyword id="KW-1185">Reference proteome</keyword>
<keyword id="KW-1278">Translocase</keyword>
<keyword id="KW-0813">Transport</keyword>
<reference key="1">
    <citation type="journal article" date="2005" name="Nucleic Acids Res.">
        <title>The genome sequence of Xanthomonas oryzae pathovar oryzae KACC10331, the bacterial blight pathogen of rice.</title>
        <authorList>
            <person name="Lee B.-M."/>
            <person name="Park Y.-J."/>
            <person name="Park D.-S."/>
            <person name="Kang H.-W."/>
            <person name="Kim J.-G."/>
            <person name="Song E.-S."/>
            <person name="Park I.-C."/>
            <person name="Yoon U.-H."/>
            <person name="Hahn J.-H."/>
            <person name="Koo B.-S."/>
            <person name="Lee G.-B."/>
            <person name="Kim H."/>
            <person name="Park H.-S."/>
            <person name="Yoon K.-O."/>
            <person name="Kim J.-H."/>
            <person name="Jung C.-H."/>
            <person name="Koh N.-H."/>
            <person name="Seo J.-S."/>
            <person name="Go S.-J."/>
        </authorList>
    </citation>
    <scope>NUCLEOTIDE SEQUENCE [LARGE SCALE GENOMIC DNA]</scope>
    <source>
        <strain>KACC10331 / KXO85</strain>
    </source>
</reference>
<accession>Q5H503</accession>
<organism>
    <name type="scientific">Xanthomonas oryzae pv. oryzae (strain KACC10331 / KXO85)</name>
    <dbReference type="NCBI Taxonomy" id="291331"/>
    <lineage>
        <taxon>Bacteria</taxon>
        <taxon>Pseudomonadati</taxon>
        <taxon>Pseudomonadota</taxon>
        <taxon>Gammaproteobacteria</taxon>
        <taxon>Lysobacterales</taxon>
        <taxon>Lysobacteraceae</taxon>
        <taxon>Xanthomonas</taxon>
    </lineage>
</organism>
<sequence length="335" mass="36330">MIEFQRLHKSYSVDGRQIVALHPLDLRIGPGEVFGIIGHSGAGKSTLIRLINRLEEPSGGRLLIGDEDVTALDSQGLRALRRRIGMIFQHFNLLSARTVAGNVAFPLELVGTPRAEIDARVAELLARVGLQEQANQYPAQLSGGQKQRVGIARALATGPQILLCDEATSALDPQTTASVLQLLAQINRELGLTIVLITHEMDVIRRVCDRVAVLDAGKLVETGPVTEVFLHPKHVTTRRFVSEAEHLDEAELHRDFAAVGGRIVRLTFLGNGTYEPVLGRIARDTGVDYNILSGRVDRIKDTPYGQLIVALTGGDQTAARAGFVAAGVQVEDLRV</sequence>
<comment type="function">
    <text evidence="1">Part of the ABC transporter complex MetNIQ involved in methionine import. Responsible for energy coupling to the transport system.</text>
</comment>
<comment type="catalytic activity">
    <reaction evidence="1">
        <text>L-methionine(out) + ATP + H2O = L-methionine(in) + ADP + phosphate + H(+)</text>
        <dbReference type="Rhea" id="RHEA:29779"/>
        <dbReference type="ChEBI" id="CHEBI:15377"/>
        <dbReference type="ChEBI" id="CHEBI:15378"/>
        <dbReference type="ChEBI" id="CHEBI:30616"/>
        <dbReference type="ChEBI" id="CHEBI:43474"/>
        <dbReference type="ChEBI" id="CHEBI:57844"/>
        <dbReference type="ChEBI" id="CHEBI:456216"/>
        <dbReference type="EC" id="7.4.2.11"/>
    </reaction>
</comment>
<comment type="catalytic activity">
    <reaction evidence="1">
        <text>D-methionine(out) + ATP + H2O = D-methionine(in) + ADP + phosphate + H(+)</text>
        <dbReference type="Rhea" id="RHEA:29767"/>
        <dbReference type="ChEBI" id="CHEBI:15377"/>
        <dbReference type="ChEBI" id="CHEBI:15378"/>
        <dbReference type="ChEBI" id="CHEBI:30616"/>
        <dbReference type="ChEBI" id="CHEBI:43474"/>
        <dbReference type="ChEBI" id="CHEBI:57932"/>
        <dbReference type="ChEBI" id="CHEBI:456216"/>
        <dbReference type="EC" id="7.4.2.11"/>
    </reaction>
</comment>
<comment type="subunit">
    <text evidence="1">The complex is composed of two ATP-binding proteins (MetN), two transmembrane proteins (MetI) and a solute-binding protein (MetQ).</text>
</comment>
<comment type="subcellular location">
    <subcellularLocation>
        <location evidence="1">Cell inner membrane</location>
        <topology evidence="1">Peripheral membrane protein</topology>
    </subcellularLocation>
</comment>
<comment type="similarity">
    <text evidence="1">Belongs to the ABC transporter superfamily. Methionine importer (TC 3.A.1.24) family.</text>
</comment>
<comment type="sequence caution" evidence="2">
    <conflict type="erroneous initiation">
        <sequence resource="EMBL-CDS" id="AAW73967"/>
    </conflict>
</comment>
<dbReference type="EC" id="7.4.2.11" evidence="1"/>
<dbReference type="EMBL" id="AE013598">
    <property type="protein sequence ID" value="AAW73967.1"/>
    <property type="status" value="ALT_INIT"/>
    <property type="molecule type" value="Genomic_DNA"/>
</dbReference>
<dbReference type="SMR" id="Q5H503"/>
<dbReference type="STRING" id="291331.XOO0713"/>
<dbReference type="KEGG" id="xoo:XOO0713"/>
<dbReference type="HOGENOM" id="CLU_000604_1_3_6"/>
<dbReference type="Proteomes" id="UP000006735">
    <property type="component" value="Chromosome"/>
</dbReference>
<dbReference type="GO" id="GO:0005886">
    <property type="term" value="C:plasma membrane"/>
    <property type="evidence" value="ECO:0007669"/>
    <property type="project" value="UniProtKB-SubCell"/>
</dbReference>
<dbReference type="GO" id="GO:0033232">
    <property type="term" value="F:ABC-type D-methionine transporter activity"/>
    <property type="evidence" value="ECO:0007669"/>
    <property type="project" value="UniProtKB-EC"/>
</dbReference>
<dbReference type="GO" id="GO:0005524">
    <property type="term" value="F:ATP binding"/>
    <property type="evidence" value="ECO:0007669"/>
    <property type="project" value="UniProtKB-KW"/>
</dbReference>
<dbReference type="GO" id="GO:0016887">
    <property type="term" value="F:ATP hydrolysis activity"/>
    <property type="evidence" value="ECO:0007669"/>
    <property type="project" value="InterPro"/>
</dbReference>
<dbReference type="CDD" id="cd03258">
    <property type="entry name" value="ABC_MetN_methionine_transporter"/>
    <property type="match status" value="1"/>
</dbReference>
<dbReference type="FunFam" id="3.40.50.300:FF:000056">
    <property type="entry name" value="Cell division ATP-binding protein FtsE"/>
    <property type="match status" value="1"/>
</dbReference>
<dbReference type="Gene3D" id="3.30.70.260">
    <property type="match status" value="1"/>
</dbReference>
<dbReference type="Gene3D" id="3.40.50.300">
    <property type="entry name" value="P-loop containing nucleotide triphosphate hydrolases"/>
    <property type="match status" value="1"/>
</dbReference>
<dbReference type="InterPro" id="IPR003593">
    <property type="entry name" value="AAA+_ATPase"/>
</dbReference>
<dbReference type="InterPro" id="IPR003439">
    <property type="entry name" value="ABC_transporter-like_ATP-bd"/>
</dbReference>
<dbReference type="InterPro" id="IPR017871">
    <property type="entry name" value="ABC_transporter-like_CS"/>
</dbReference>
<dbReference type="InterPro" id="IPR045865">
    <property type="entry name" value="ACT-like_dom_sf"/>
</dbReference>
<dbReference type="InterPro" id="IPR041701">
    <property type="entry name" value="MetN_ABC"/>
</dbReference>
<dbReference type="InterPro" id="IPR050086">
    <property type="entry name" value="MetN_ABC_transporter-like"/>
</dbReference>
<dbReference type="InterPro" id="IPR018449">
    <property type="entry name" value="NIL_domain"/>
</dbReference>
<dbReference type="InterPro" id="IPR027417">
    <property type="entry name" value="P-loop_NTPase"/>
</dbReference>
<dbReference type="PANTHER" id="PTHR43166">
    <property type="entry name" value="AMINO ACID IMPORT ATP-BINDING PROTEIN"/>
    <property type="match status" value="1"/>
</dbReference>
<dbReference type="PANTHER" id="PTHR43166:SF30">
    <property type="entry name" value="METHIONINE IMPORT ATP-BINDING PROTEIN METN"/>
    <property type="match status" value="1"/>
</dbReference>
<dbReference type="Pfam" id="PF00005">
    <property type="entry name" value="ABC_tran"/>
    <property type="match status" value="1"/>
</dbReference>
<dbReference type="Pfam" id="PF09383">
    <property type="entry name" value="NIL"/>
    <property type="match status" value="1"/>
</dbReference>
<dbReference type="SMART" id="SM00382">
    <property type="entry name" value="AAA"/>
    <property type="match status" value="1"/>
</dbReference>
<dbReference type="SMART" id="SM00930">
    <property type="entry name" value="NIL"/>
    <property type="match status" value="1"/>
</dbReference>
<dbReference type="SUPFAM" id="SSF55021">
    <property type="entry name" value="ACT-like"/>
    <property type="match status" value="1"/>
</dbReference>
<dbReference type="SUPFAM" id="SSF52540">
    <property type="entry name" value="P-loop containing nucleoside triphosphate hydrolases"/>
    <property type="match status" value="1"/>
</dbReference>
<dbReference type="PROSITE" id="PS00211">
    <property type="entry name" value="ABC_TRANSPORTER_1"/>
    <property type="match status" value="1"/>
</dbReference>
<dbReference type="PROSITE" id="PS50893">
    <property type="entry name" value="ABC_TRANSPORTER_2"/>
    <property type="match status" value="1"/>
</dbReference>
<dbReference type="PROSITE" id="PS51264">
    <property type="entry name" value="METN"/>
    <property type="match status" value="1"/>
</dbReference>
<gene>
    <name evidence="1" type="primary">metN</name>
    <name type="ordered locus">XOO0713</name>
</gene>